<reference key="1">
    <citation type="submission" date="2007-09" db="EMBL/GenBank/DDBJ databases">
        <title>Complete genome sequence of Rickettsia canadensis.</title>
        <authorList>
            <person name="Madan A."/>
            <person name="Fahey J."/>
            <person name="Helton E."/>
            <person name="Ketteman M."/>
            <person name="Madan A."/>
            <person name="Rodrigues S."/>
            <person name="Sanchez A."/>
            <person name="Whiting M."/>
            <person name="Dasch G."/>
            <person name="Eremeeva M."/>
        </authorList>
    </citation>
    <scope>NUCLEOTIDE SEQUENCE [LARGE SCALE GENOMIC DNA]</scope>
    <source>
        <strain>McKiel</strain>
    </source>
</reference>
<accession>A8EZ55</accession>
<sequence length="244" mass="27329">MKHSDVAVIIPSRLSSTRLKQKPLQLIGSITLIERVFKQVSQANLEHTYVTTDSEEIAKIIKKVGGKVIFTNSNIPTGTDRTYEAFKLIPNNQNINYIVNVQGDMPFIEPSSILKIIEYLKNSEYDIVTPVVKVDKESVEAASNVTVAVNSAGKALYFSRSLIPNGAEEFLYHVGIYGFCKSALEKFISIKPTFLEKTERLEQLRILENNIAIGTCLVNNVPISVDTEEDLQKAIKFYENISKL</sequence>
<dbReference type="EC" id="2.7.7.38" evidence="1"/>
<dbReference type="EMBL" id="CP000409">
    <property type="protein sequence ID" value="ABV73638.1"/>
    <property type="molecule type" value="Genomic_DNA"/>
</dbReference>
<dbReference type="RefSeq" id="WP_012148833.1">
    <property type="nucleotide sequence ID" value="NC_009879.1"/>
</dbReference>
<dbReference type="SMR" id="A8EZ55"/>
<dbReference type="STRING" id="293613.A1E_03515"/>
<dbReference type="KEGG" id="rcm:A1E_03515"/>
<dbReference type="eggNOG" id="COG1212">
    <property type="taxonomic scope" value="Bacteria"/>
</dbReference>
<dbReference type="HOGENOM" id="CLU_065038_0_1_5"/>
<dbReference type="UniPathway" id="UPA00030"/>
<dbReference type="UniPathway" id="UPA00358">
    <property type="reaction ID" value="UER00476"/>
</dbReference>
<dbReference type="Proteomes" id="UP000007056">
    <property type="component" value="Chromosome"/>
</dbReference>
<dbReference type="GO" id="GO:0005829">
    <property type="term" value="C:cytosol"/>
    <property type="evidence" value="ECO:0007669"/>
    <property type="project" value="TreeGrafter"/>
</dbReference>
<dbReference type="GO" id="GO:0008690">
    <property type="term" value="F:3-deoxy-manno-octulosonate cytidylyltransferase activity"/>
    <property type="evidence" value="ECO:0007669"/>
    <property type="project" value="UniProtKB-UniRule"/>
</dbReference>
<dbReference type="GO" id="GO:0033468">
    <property type="term" value="P:CMP-keto-3-deoxy-D-manno-octulosonic acid biosynthetic process"/>
    <property type="evidence" value="ECO:0007669"/>
    <property type="project" value="UniProtKB-UniRule"/>
</dbReference>
<dbReference type="GO" id="GO:0009103">
    <property type="term" value="P:lipopolysaccharide biosynthetic process"/>
    <property type="evidence" value="ECO:0007669"/>
    <property type="project" value="UniProtKB-UniRule"/>
</dbReference>
<dbReference type="CDD" id="cd02517">
    <property type="entry name" value="CMP-KDO-Synthetase"/>
    <property type="match status" value="1"/>
</dbReference>
<dbReference type="Gene3D" id="3.90.550.10">
    <property type="entry name" value="Spore Coat Polysaccharide Biosynthesis Protein SpsA, Chain A"/>
    <property type="match status" value="1"/>
</dbReference>
<dbReference type="HAMAP" id="MF_00057">
    <property type="entry name" value="KdsB"/>
    <property type="match status" value="1"/>
</dbReference>
<dbReference type="InterPro" id="IPR003329">
    <property type="entry name" value="Cytidylyl_trans"/>
</dbReference>
<dbReference type="InterPro" id="IPR004528">
    <property type="entry name" value="KdsB"/>
</dbReference>
<dbReference type="InterPro" id="IPR029044">
    <property type="entry name" value="Nucleotide-diphossugar_trans"/>
</dbReference>
<dbReference type="NCBIfam" id="TIGR00466">
    <property type="entry name" value="kdsB"/>
    <property type="match status" value="1"/>
</dbReference>
<dbReference type="NCBIfam" id="NF003948">
    <property type="entry name" value="PRK05450.1-1"/>
    <property type="match status" value="1"/>
</dbReference>
<dbReference type="NCBIfam" id="NF003952">
    <property type="entry name" value="PRK05450.1-5"/>
    <property type="match status" value="1"/>
</dbReference>
<dbReference type="PANTHER" id="PTHR42866">
    <property type="entry name" value="3-DEOXY-MANNO-OCTULOSONATE CYTIDYLYLTRANSFERASE"/>
    <property type="match status" value="1"/>
</dbReference>
<dbReference type="PANTHER" id="PTHR42866:SF2">
    <property type="entry name" value="3-DEOXY-MANNO-OCTULOSONATE CYTIDYLYLTRANSFERASE, MITOCHONDRIAL"/>
    <property type="match status" value="1"/>
</dbReference>
<dbReference type="Pfam" id="PF02348">
    <property type="entry name" value="CTP_transf_3"/>
    <property type="match status" value="1"/>
</dbReference>
<dbReference type="SUPFAM" id="SSF53448">
    <property type="entry name" value="Nucleotide-diphospho-sugar transferases"/>
    <property type="match status" value="1"/>
</dbReference>
<protein>
    <recommendedName>
        <fullName evidence="1">3-deoxy-manno-octulosonate cytidylyltransferase</fullName>
        <ecNumber evidence="1">2.7.7.38</ecNumber>
    </recommendedName>
    <alternativeName>
        <fullName evidence="1">CMP-2-keto-3-deoxyoctulosonic acid synthase</fullName>
        <shortName evidence="1">CKS</shortName>
        <shortName evidence="1">CMP-KDO synthase</shortName>
    </alternativeName>
</protein>
<keyword id="KW-0963">Cytoplasm</keyword>
<keyword id="KW-0448">Lipopolysaccharide biosynthesis</keyword>
<keyword id="KW-0548">Nucleotidyltransferase</keyword>
<keyword id="KW-0808">Transferase</keyword>
<gene>
    <name evidence="1" type="primary">kdsB</name>
    <name type="ordered locus">A1E_03515</name>
</gene>
<proteinExistence type="inferred from homology"/>
<feature type="chain" id="PRO_1000003377" description="3-deoxy-manno-octulosonate cytidylyltransferase">
    <location>
        <begin position="1"/>
        <end position="244"/>
    </location>
</feature>
<organism>
    <name type="scientific">Rickettsia canadensis (strain McKiel)</name>
    <dbReference type="NCBI Taxonomy" id="293613"/>
    <lineage>
        <taxon>Bacteria</taxon>
        <taxon>Pseudomonadati</taxon>
        <taxon>Pseudomonadota</taxon>
        <taxon>Alphaproteobacteria</taxon>
        <taxon>Rickettsiales</taxon>
        <taxon>Rickettsiaceae</taxon>
        <taxon>Rickettsieae</taxon>
        <taxon>Rickettsia</taxon>
        <taxon>belli group</taxon>
    </lineage>
</organism>
<evidence type="ECO:0000255" key="1">
    <source>
        <dbReference type="HAMAP-Rule" id="MF_00057"/>
    </source>
</evidence>
<comment type="function">
    <text evidence="1">Activates KDO (a required 8-carbon sugar) for incorporation into bacterial lipopolysaccharide in Gram-negative bacteria.</text>
</comment>
<comment type="catalytic activity">
    <reaction evidence="1">
        <text>3-deoxy-alpha-D-manno-oct-2-ulosonate + CTP = CMP-3-deoxy-beta-D-manno-octulosonate + diphosphate</text>
        <dbReference type="Rhea" id="RHEA:23448"/>
        <dbReference type="ChEBI" id="CHEBI:33019"/>
        <dbReference type="ChEBI" id="CHEBI:37563"/>
        <dbReference type="ChEBI" id="CHEBI:85986"/>
        <dbReference type="ChEBI" id="CHEBI:85987"/>
        <dbReference type="EC" id="2.7.7.38"/>
    </reaction>
</comment>
<comment type="pathway">
    <text evidence="1">Nucleotide-sugar biosynthesis; CMP-3-deoxy-D-manno-octulosonate biosynthesis; CMP-3-deoxy-D-manno-octulosonate from 3-deoxy-D-manno-octulosonate and CTP: step 1/1.</text>
</comment>
<comment type="pathway">
    <text evidence="1">Bacterial outer membrane biogenesis; lipopolysaccharide biosynthesis.</text>
</comment>
<comment type="subcellular location">
    <subcellularLocation>
        <location evidence="1">Cytoplasm</location>
    </subcellularLocation>
</comment>
<comment type="similarity">
    <text evidence="1">Belongs to the KdsB family.</text>
</comment>
<name>KDSB_RICCK</name>